<dbReference type="EMBL" id="DP000011">
    <property type="protein sequence ID" value="ABA96482.1"/>
    <property type="molecule type" value="Genomic_DNA"/>
</dbReference>
<dbReference type="EMBL" id="AP008218">
    <property type="protein sequence ID" value="BAF29209.2"/>
    <property type="status" value="ALT_INIT"/>
    <property type="molecule type" value="Genomic_DNA"/>
</dbReference>
<dbReference type="EMBL" id="AP014968">
    <property type="protein sequence ID" value="BAT15943.1"/>
    <property type="molecule type" value="Genomic_DNA"/>
</dbReference>
<dbReference type="EMBL" id="CM000149">
    <property type="protein sequence ID" value="EEE52790.1"/>
    <property type="status" value="ALT_INIT"/>
    <property type="molecule type" value="Genomic_DNA"/>
</dbReference>
<dbReference type="RefSeq" id="XP_015619657.1">
    <property type="nucleotide sequence ID" value="XM_015764171.1"/>
</dbReference>
<dbReference type="SMR" id="Q2QXJ1"/>
<dbReference type="FunCoup" id="Q2QXJ1">
    <property type="interactions" value="40"/>
</dbReference>
<dbReference type="STRING" id="39947.Q2QXJ1"/>
<dbReference type="PaxDb" id="39947-Q2QXJ1"/>
<dbReference type="EnsemblPlants" id="Os12t0154900-00">
    <property type="protein sequence ID" value="Os12t0154900-00"/>
    <property type="gene ID" value="Os12g0154900"/>
</dbReference>
<dbReference type="Gramene" id="Os12t0154900-00">
    <property type="protein sequence ID" value="Os12t0154900-00"/>
    <property type="gene ID" value="Os12g0154900"/>
</dbReference>
<dbReference type="KEGG" id="dosa:Os12g0154900"/>
<dbReference type="eggNOG" id="ENOG502QQ4A">
    <property type="taxonomic scope" value="Eukaryota"/>
</dbReference>
<dbReference type="HOGENOM" id="CLU_015790_0_0_1"/>
<dbReference type="InParanoid" id="Q2QXJ1"/>
<dbReference type="OMA" id="CNAHART"/>
<dbReference type="OrthoDB" id="1921208at2759"/>
<dbReference type="Proteomes" id="UP000000763">
    <property type="component" value="Chromosome 12"/>
</dbReference>
<dbReference type="Proteomes" id="UP000007752">
    <property type="component" value="Chromosome 12"/>
</dbReference>
<dbReference type="Proteomes" id="UP000059680">
    <property type="component" value="Chromosome 12"/>
</dbReference>
<dbReference type="GO" id="GO:0048046">
    <property type="term" value="C:apoplast"/>
    <property type="evidence" value="ECO:0007669"/>
    <property type="project" value="UniProtKB-SubCell"/>
</dbReference>
<dbReference type="GO" id="GO:0030145">
    <property type="term" value="F:manganese ion binding"/>
    <property type="evidence" value="ECO:0007669"/>
    <property type="project" value="InterPro"/>
</dbReference>
<dbReference type="CDD" id="cd02241">
    <property type="entry name" value="cupin_OxOx"/>
    <property type="match status" value="1"/>
</dbReference>
<dbReference type="FunFam" id="2.60.120.10:FF:000005">
    <property type="entry name" value="Germin-like protein subfamily 1 member 8"/>
    <property type="match status" value="1"/>
</dbReference>
<dbReference type="Gene3D" id="2.60.120.10">
    <property type="entry name" value="Jelly Rolls"/>
    <property type="match status" value="1"/>
</dbReference>
<dbReference type="InterPro" id="IPR006045">
    <property type="entry name" value="Cupin_1"/>
</dbReference>
<dbReference type="InterPro" id="IPR001929">
    <property type="entry name" value="Germin"/>
</dbReference>
<dbReference type="InterPro" id="IPR019780">
    <property type="entry name" value="Germin_Mn-BS"/>
</dbReference>
<dbReference type="InterPro" id="IPR014710">
    <property type="entry name" value="RmlC-like_jellyroll"/>
</dbReference>
<dbReference type="InterPro" id="IPR011051">
    <property type="entry name" value="RmlC_Cupin_sf"/>
</dbReference>
<dbReference type="PANTHER" id="PTHR31238">
    <property type="entry name" value="GERMIN-LIKE PROTEIN SUBFAMILY 3 MEMBER 3"/>
    <property type="match status" value="1"/>
</dbReference>
<dbReference type="Pfam" id="PF00190">
    <property type="entry name" value="Cupin_1"/>
    <property type="match status" value="1"/>
</dbReference>
<dbReference type="PRINTS" id="PR00325">
    <property type="entry name" value="GERMIN"/>
</dbReference>
<dbReference type="SMART" id="SM00835">
    <property type="entry name" value="Cupin_1"/>
    <property type="match status" value="1"/>
</dbReference>
<dbReference type="SUPFAM" id="SSF51182">
    <property type="entry name" value="RmlC-like cupins"/>
    <property type="match status" value="1"/>
</dbReference>
<dbReference type="PROSITE" id="PS00725">
    <property type="entry name" value="GERMIN"/>
    <property type="match status" value="1"/>
</dbReference>
<comment type="function">
    <text>May play a role in plant defense. Probably has no oxalate oxidase activity even if the active site is conserved.</text>
</comment>
<comment type="subunit">
    <text evidence="1">Oligomer (believed to be a pentamer but probably hexamer).</text>
</comment>
<comment type="subcellular location">
    <subcellularLocation>
        <location evidence="1">Secreted</location>
        <location evidence="1">Extracellular space</location>
        <location evidence="1">Apoplast</location>
    </subcellularLocation>
</comment>
<comment type="similarity">
    <text evidence="3">Belongs to the germin family.</text>
</comment>
<comment type="sequence caution" evidence="3">
    <conflict type="erroneous initiation">
        <sequence resource="EMBL-CDS" id="BAF29209"/>
    </conflict>
    <text>Truncated N-terminus.</text>
</comment>
<comment type="sequence caution" evidence="3">
    <conflict type="erroneous initiation">
        <sequence resource="EMBL-CDS" id="EEE52790"/>
    </conflict>
    <text>Truncated N-terminus.</text>
</comment>
<evidence type="ECO:0000250" key="1"/>
<evidence type="ECO:0000255" key="2"/>
<evidence type="ECO:0000305" key="3"/>
<organism>
    <name type="scientific">Oryza sativa subsp. japonica</name>
    <name type="common">Rice</name>
    <dbReference type="NCBI Taxonomy" id="39947"/>
    <lineage>
        <taxon>Eukaryota</taxon>
        <taxon>Viridiplantae</taxon>
        <taxon>Streptophyta</taxon>
        <taxon>Embryophyta</taxon>
        <taxon>Tracheophyta</taxon>
        <taxon>Spermatophyta</taxon>
        <taxon>Magnoliopsida</taxon>
        <taxon>Liliopsida</taxon>
        <taxon>Poales</taxon>
        <taxon>Poaceae</taxon>
        <taxon>BOP clade</taxon>
        <taxon>Oryzoideae</taxon>
        <taxon>Oryzeae</taxon>
        <taxon>Oryzinae</taxon>
        <taxon>Oryza</taxon>
        <taxon>Oryza sativa</taxon>
    </lineage>
</organism>
<protein>
    <recommendedName>
        <fullName>Putative germin-like protein 12-3</fullName>
    </recommendedName>
</protein>
<sequence>MASSNFFLLIPLIALVTTQAMASDPSPLQDLCVADKNSPVRVNGFPCKDAKDVSVDDFFLAANLDKPMDITKSKAGSNVTLINVMKLAGLNTLGISMARIDYAPKGQNPPHTHPRATEILSVIEGSLYVGFVTSNQANGENKLFTKTLNKGDVFVFPEGLIHFQFNPSYDKPAAAIVALSSQNPGAITIANAVFGSNPPISDDVLAKAFQVDKKAVDWLQAQFWENNHN</sequence>
<keyword id="KW-0052">Apoplast</keyword>
<keyword id="KW-1015">Disulfide bond</keyword>
<keyword id="KW-0325">Glycoprotein</keyword>
<keyword id="KW-0464">Manganese</keyword>
<keyword id="KW-0479">Metal-binding</keyword>
<keyword id="KW-1185">Reference proteome</keyword>
<keyword id="KW-0964">Secreted</keyword>
<keyword id="KW-0732">Signal</keyword>
<accession>Q2QXJ1</accession>
<accession>A0A0P0Y756</accession>
<accession>B9GBY3</accession>
<gene>
    <name type="ordered locus">Os12g0154900</name>
    <name type="ordered locus">LOC_Os12g05870</name>
    <name type="ORF">OsJ_033899</name>
    <name type="ORF">OsJ_35265</name>
</gene>
<feature type="signal peptide" evidence="2">
    <location>
        <begin position="1"/>
        <end position="22"/>
    </location>
</feature>
<feature type="chain" id="PRO_0000365533" description="Putative germin-like protein 12-3">
    <location>
        <begin position="23"/>
        <end position="229"/>
    </location>
</feature>
<feature type="domain" description="Cupin type-1" evidence="2">
    <location>
        <begin position="62"/>
        <end position="217"/>
    </location>
</feature>
<feature type="binding site" evidence="1">
    <location>
        <position position="111"/>
    </location>
    <ligand>
        <name>Mn(2+)</name>
        <dbReference type="ChEBI" id="CHEBI:29035"/>
    </ligand>
</feature>
<feature type="binding site" evidence="1">
    <location>
        <position position="113"/>
    </location>
    <ligand>
        <name>Mn(2+)</name>
        <dbReference type="ChEBI" id="CHEBI:29035"/>
    </ligand>
</feature>
<feature type="binding site" evidence="1">
    <location>
        <position position="118"/>
    </location>
    <ligand>
        <name>Mn(2+)</name>
        <dbReference type="ChEBI" id="CHEBI:29035"/>
    </ligand>
</feature>
<feature type="binding site" evidence="1">
    <location>
        <position position="162"/>
    </location>
    <ligand>
        <name>Mn(2+)</name>
        <dbReference type="ChEBI" id="CHEBI:29035"/>
    </ligand>
</feature>
<feature type="glycosylation site" description="N-linked (GlcNAc...) asparagine" evidence="2">
    <location>
        <position position="78"/>
    </location>
</feature>
<feature type="disulfide bond" evidence="1">
    <location>
        <begin position="32"/>
        <end position="47"/>
    </location>
</feature>
<name>GL123_ORYSJ</name>
<reference key="1">
    <citation type="journal article" date="2005" name="BMC Biol.">
        <title>The sequence of rice chromosomes 11 and 12, rich in disease resistance genes and recent gene duplications.</title>
        <authorList>
            <consortium name="The rice chromosomes 11 and 12 sequencing consortia"/>
        </authorList>
    </citation>
    <scope>NUCLEOTIDE SEQUENCE [LARGE SCALE GENOMIC DNA]</scope>
    <source>
        <strain>cv. Nipponbare</strain>
    </source>
</reference>
<reference key="2">
    <citation type="journal article" date="2005" name="Nature">
        <title>The map-based sequence of the rice genome.</title>
        <authorList>
            <consortium name="International rice genome sequencing project (IRGSP)"/>
        </authorList>
    </citation>
    <scope>NUCLEOTIDE SEQUENCE [LARGE SCALE GENOMIC DNA]</scope>
    <source>
        <strain>cv. Nipponbare</strain>
    </source>
</reference>
<reference key="3">
    <citation type="journal article" date="2008" name="Nucleic Acids Res.">
        <title>The rice annotation project database (RAP-DB): 2008 update.</title>
        <authorList>
            <consortium name="The rice annotation project (RAP)"/>
        </authorList>
    </citation>
    <scope>GENOME REANNOTATION</scope>
    <source>
        <strain>cv. Nipponbare</strain>
    </source>
</reference>
<reference key="4">
    <citation type="journal article" date="2013" name="Rice">
        <title>Improvement of the Oryza sativa Nipponbare reference genome using next generation sequence and optical map data.</title>
        <authorList>
            <person name="Kawahara Y."/>
            <person name="de la Bastide M."/>
            <person name="Hamilton J.P."/>
            <person name="Kanamori H."/>
            <person name="McCombie W.R."/>
            <person name="Ouyang S."/>
            <person name="Schwartz D.C."/>
            <person name="Tanaka T."/>
            <person name="Wu J."/>
            <person name="Zhou S."/>
            <person name="Childs K.L."/>
            <person name="Davidson R.M."/>
            <person name="Lin H."/>
            <person name="Quesada-Ocampo L."/>
            <person name="Vaillancourt B."/>
            <person name="Sakai H."/>
            <person name="Lee S.S."/>
            <person name="Kim J."/>
            <person name="Numa H."/>
            <person name="Itoh T."/>
            <person name="Buell C.R."/>
            <person name="Matsumoto T."/>
        </authorList>
    </citation>
    <scope>GENOME REANNOTATION</scope>
    <source>
        <strain>cv. Nipponbare</strain>
    </source>
</reference>
<reference key="5">
    <citation type="journal article" date="2005" name="PLoS Biol.">
        <title>The genomes of Oryza sativa: a history of duplications.</title>
        <authorList>
            <person name="Yu J."/>
            <person name="Wang J."/>
            <person name="Lin W."/>
            <person name="Li S."/>
            <person name="Li H."/>
            <person name="Zhou J."/>
            <person name="Ni P."/>
            <person name="Dong W."/>
            <person name="Hu S."/>
            <person name="Zeng C."/>
            <person name="Zhang J."/>
            <person name="Zhang Y."/>
            <person name="Li R."/>
            <person name="Xu Z."/>
            <person name="Li S."/>
            <person name="Li X."/>
            <person name="Zheng H."/>
            <person name="Cong L."/>
            <person name="Lin L."/>
            <person name="Yin J."/>
            <person name="Geng J."/>
            <person name="Li G."/>
            <person name="Shi J."/>
            <person name="Liu J."/>
            <person name="Lv H."/>
            <person name="Li J."/>
            <person name="Wang J."/>
            <person name="Deng Y."/>
            <person name="Ran L."/>
            <person name="Shi X."/>
            <person name="Wang X."/>
            <person name="Wu Q."/>
            <person name="Li C."/>
            <person name="Ren X."/>
            <person name="Wang J."/>
            <person name="Wang X."/>
            <person name="Li D."/>
            <person name="Liu D."/>
            <person name="Zhang X."/>
            <person name="Ji Z."/>
            <person name="Zhao W."/>
            <person name="Sun Y."/>
            <person name="Zhang Z."/>
            <person name="Bao J."/>
            <person name="Han Y."/>
            <person name="Dong L."/>
            <person name="Ji J."/>
            <person name="Chen P."/>
            <person name="Wu S."/>
            <person name="Liu J."/>
            <person name="Xiao Y."/>
            <person name="Bu D."/>
            <person name="Tan J."/>
            <person name="Yang L."/>
            <person name="Ye C."/>
            <person name="Zhang J."/>
            <person name="Xu J."/>
            <person name="Zhou Y."/>
            <person name="Yu Y."/>
            <person name="Zhang B."/>
            <person name="Zhuang S."/>
            <person name="Wei H."/>
            <person name="Liu B."/>
            <person name="Lei M."/>
            <person name="Yu H."/>
            <person name="Li Y."/>
            <person name="Xu H."/>
            <person name="Wei S."/>
            <person name="He X."/>
            <person name="Fang L."/>
            <person name="Zhang Z."/>
            <person name="Zhang Y."/>
            <person name="Huang X."/>
            <person name="Su Z."/>
            <person name="Tong W."/>
            <person name="Li J."/>
            <person name="Tong Z."/>
            <person name="Li S."/>
            <person name="Ye J."/>
            <person name="Wang L."/>
            <person name="Fang L."/>
            <person name="Lei T."/>
            <person name="Chen C.-S."/>
            <person name="Chen H.-C."/>
            <person name="Xu Z."/>
            <person name="Li H."/>
            <person name="Huang H."/>
            <person name="Zhang F."/>
            <person name="Xu H."/>
            <person name="Li N."/>
            <person name="Zhao C."/>
            <person name="Li S."/>
            <person name="Dong L."/>
            <person name="Huang Y."/>
            <person name="Li L."/>
            <person name="Xi Y."/>
            <person name="Qi Q."/>
            <person name="Li W."/>
            <person name="Zhang B."/>
            <person name="Hu W."/>
            <person name="Zhang Y."/>
            <person name="Tian X."/>
            <person name="Jiao Y."/>
            <person name="Liang X."/>
            <person name="Jin J."/>
            <person name="Gao L."/>
            <person name="Zheng W."/>
            <person name="Hao B."/>
            <person name="Liu S.-M."/>
            <person name="Wang W."/>
            <person name="Yuan L."/>
            <person name="Cao M."/>
            <person name="McDermott J."/>
            <person name="Samudrala R."/>
            <person name="Wang J."/>
            <person name="Wong G.K.-S."/>
            <person name="Yang H."/>
        </authorList>
    </citation>
    <scope>NUCLEOTIDE SEQUENCE [LARGE SCALE GENOMIC DNA]</scope>
    <source>
        <strain>cv. Nipponbare</strain>
    </source>
</reference>
<proteinExistence type="inferred from homology"/>